<proteinExistence type="evidence at protein level"/>
<comment type="function">
    <text evidence="1 2 8 9 10 11 12 14 15 19">Calcium-dependent protein kinase which acts as a sensor and effector of intracellular Ca(2+) levels probably in part downstream of cGMP-activated PKG kinase (PubMed:18768477, PubMed:19307175, PubMed:28680058, PubMed:29716996). By phosphorylating various proteins, required for microneme secretion and thus merozoite egress from and invasion of host erythrocytes (PubMed:23204525, PubMed:28680058, PubMed:29716996). During gametogenesis, essential for the development of both male and female gametes (By similarity). Phosphorylates SERA5 p50 which enhances SERA5 p50 protease activity; however, SERA5 p50 protease activity has been shown in other studies to be controversial (PubMed:29716996). Probably by phosphorylating SERA5 p50, plays a role in merozoite egress from host erythrocytes (PubMed:29716996). Probably prior or during merozoite invasion of host erythrocytes, phosphorylates rhoptry protein RhopH3 which is required for RhopH3 localization to rhoptries and for its secretion (PubMed:33024030). Probably in late schizonts, phosphorylates myosin A tail domain-interacting protein MTIP and glideosome-associated protein 45 GAP45, both of which are components of the motor complex that generates the force required by the parasite to invade host cells (PubMed:18768477, PubMed:22539638, PubMed:28680058). In late schizonts, phosphorylates inner membrane complex protein IMC1g (PubMed:28680058). In late schizonts, phosphorylates PKA regulatory subunit PKAr in a calcium-dependent manner, which may contribute to the dissociation of regulatory PKAr and catalytic PKAc subunits and promote the activation of PKAc (PubMed:28680058). May phosphorylate raf kinase inhibitory protein RKIP which in turn may regulate CDPK1 catalytic activity (PubMed:17123645). May phosphorylate proteins of the host erythrocyte membranes (By similarity).</text>
</comment>
<comment type="catalytic activity">
    <reaction evidence="8 9 10 11 12 13 14 17 19">
        <text>L-seryl-[protein] + ATP = O-phospho-L-seryl-[protein] + ADP + H(+)</text>
        <dbReference type="Rhea" id="RHEA:17989"/>
        <dbReference type="Rhea" id="RHEA-COMP:9863"/>
        <dbReference type="Rhea" id="RHEA-COMP:11604"/>
        <dbReference type="ChEBI" id="CHEBI:15378"/>
        <dbReference type="ChEBI" id="CHEBI:29999"/>
        <dbReference type="ChEBI" id="CHEBI:30616"/>
        <dbReference type="ChEBI" id="CHEBI:83421"/>
        <dbReference type="ChEBI" id="CHEBI:456216"/>
        <dbReference type="EC" id="2.7.11.1"/>
    </reaction>
</comment>
<comment type="catalytic activity">
    <reaction evidence="10 11 12 13 14 15 17">
        <text>L-threonyl-[protein] + ATP = O-phospho-L-threonyl-[protein] + ADP + H(+)</text>
        <dbReference type="Rhea" id="RHEA:46608"/>
        <dbReference type="Rhea" id="RHEA-COMP:11060"/>
        <dbReference type="Rhea" id="RHEA-COMP:11605"/>
        <dbReference type="ChEBI" id="CHEBI:15378"/>
        <dbReference type="ChEBI" id="CHEBI:30013"/>
        <dbReference type="ChEBI" id="CHEBI:30616"/>
        <dbReference type="ChEBI" id="CHEBI:61977"/>
        <dbReference type="ChEBI" id="CHEBI:456216"/>
        <dbReference type="EC" id="2.7.11.1"/>
    </reaction>
</comment>
<comment type="cofactor">
    <cofactor evidence="9">
        <name>Mg(2+)</name>
        <dbReference type="ChEBI" id="CHEBI:18420"/>
    </cofactor>
</comment>
<comment type="activity regulation">
    <text evidence="8 9 10 12 14 15 17 23">Activated by calcium (PubMed:17123645, PubMed:18768477, PubMed:23204525, PubMed:29716996, PubMed:32484216). Upon calcium binding to the EF-hand domains, the C-terminus of the junction domain (J domain) undergoes a conformational change which results in the dissociation of the pseudo-substrate inhibitory motif from the catalytic domain (Probable) (PubMed:23204525). This, in turn may facilitate the autophosphorylation of the activation loop at Thr-231, which leads to the kinase activation (PubMed:19307175). May be negatively regulated by PKA-mediated phosphorylation (PubMed:28680058). Inhibited by purfalcamine (PubMed:23204525, PubMed:29716996).</text>
</comment>
<comment type="biophysicochemical properties">
    <kinetics>
        <KM evidence="9">9 uM for MTIP (at 30 degrees Celsius)</KM>
        <KM evidence="9">18 uM for GAP45 (at 30 degrees Celsius)</KM>
        <KM evidence="9">125 uM for ATP (with MTIP as substrate and at 30 degrees Celsius)</KM>
        <KM evidence="9">96 uM for ATP (with GAP45 as substrate and at 30 degrees Celsius)</KM>
    </kinetics>
</comment>
<comment type="subunit">
    <text evidence="13 14 15 17 18 19">Monomer (PubMed:26149123). Forms a high molecular weight (250 and 400 kDa) complex (PubMed:26149123). Forms a complex composed of CDPK1, PKA regulatory subunit PKAr and 14-3-3I; the complex is formed in merozoites in response to low extracellular level of K(+) and may play a role in microneme secretion (PubMed:32817103). Interacts (when phosphorylated) with 14-3-3I in a Ca(2+)-independent manner; the interaction does not regulate CDPK1 catalytic activity but is required for merozoite invasion of host erythrocytes (PubMed:32484216, PubMed:32817103). Interacts with PKA regulatory subunit PKAr; in a Ca(2+)-dependent manner (PubMed:28680058, PubMed:32817103). Interacts with SERA5 p50 in the late schizont stage (PubMed:29716996). Interacts with inner membrane complex protein IMC1g in late schizonts (PubMed:28680058). Interacts with rhoptry protein RhopH3 in merozoites (PubMed:33024030).</text>
</comment>
<comment type="subcellular location">
    <subcellularLocation>
        <location evidence="7 12 14">Membrane</location>
        <topology evidence="7">Lipid-anchor</topology>
    </subcellularLocation>
    <subcellularLocation>
        <location evidence="7 9 13 16 17">Cell membrane</location>
        <topology evidence="7 16">Lipid-anchor</topology>
        <orientation evidence="21">Cytoplasmic side</orientation>
    </subcellularLocation>
    <subcellularLocation>
        <location evidence="7 12 15">Parasitophorous vacuole membrane</location>
        <topology evidence="7">Lipid-anchor</topology>
    </subcellularLocation>
    <subcellularLocation>
        <location evidence="1">Cytoplasm</location>
    </subcellularLocation>
    <subcellularLocation>
        <location evidence="1">Cell projection</location>
        <location evidence="1">Cilium</location>
        <location evidence="1">Flagellum</location>
    </subcellularLocation>
    <subcellularLocation>
        <location evidence="12">Host cell membrane</location>
        <topology evidence="21">Lipid-anchor</topology>
    </subcellularLocation>
    <text evidence="1 2 7 9 12 13">Localizes to the host erythrocytic membrane at low level (By similarity). Localizes to the cell membrane in the nascent merozoites contained within the late-stage schizonts and in free merozoites (PubMed:18768477, PubMed:26149123). Colocalizes with MTIP around developing merozoites in segmented schizonts, also localizes in membranes around the mature food vacuole/residual body of the schizonts (PubMed:18768477). Ser-64 phosphorylated form localizes at the apical pole in punctate structures in merozoites within late schizonts in free merozoites (PubMed:26149123). In trophozoites and schizonts, localizes to the parasitophorous vacuole (PV) and in membranous systems derived from the PV including intraparasitic vacuoles and the tubovesicular system, an extension of the parasitophorous vacuole membrane into the host cell cytoplasm (PubMed:15491359, PubMed:23204525). Localization to the cytoplasm in trophozoite or schizonts is minimal (PubMed:15491359). In female stage V gametocytes and gametes, localizes to the cell membrane (By similarity). In stage V male gametocytes, localizes to the cell membrane and in the cytoplasm (By similarity). In male gametes, localizes to the residual body, cell membrane and in the flagella (By similarity). Calcium and/or autophosphorylation does not affect membrane localization (PubMed:15491359).</text>
</comment>
<comment type="developmental stage">
    <text evidence="7 9 12 13 14 15 16 17 18">Expressed during parasite asexual blood stages, specifically at the ring and schizont stages, in free merozoites and to a lesser extent in trophozoites (at protein level).</text>
</comment>
<comment type="domain">
    <text evidence="10 12">The junction domain (J domain) is composed of 2 motifs that maintain the kinase inactive (PubMed:19307175). The N-terminal autoinhibitory motif acts as a pseudosubstrate inhibiting the catalytic domain while the C-terminal motif binds the EF-hand domains (PubMed:19307175, PubMed:23204525).</text>
</comment>
<comment type="PTM">
    <text evidence="7">Myristoylated (PubMed:15491359). Myristoylation, palmitoylation and the basic cluster motif are required for the localization to the parasitophorous vacuole membrane (PubMed:15491359).</text>
</comment>
<comment type="PTM">
    <text evidence="7 16 22">Palmitoylated (Probable) (PubMed:32003970). Palmitoylation increases in merozoites in response to low level of extracellular K(+) in the host blood (PubMed:32003970). Myristoylation, palmitoylation and the basic cluster motif are required for the localization to the parasitophorous vacuole membrane (PubMed:15491359).</text>
</comment>
<comment type="PTM">
    <text evidence="7 8 11 12 13 17 18">Phosphorylation at Ser-64 occurs at late schizont stage and regulates CDPK1 protein-protein interaction (PubMed:26149123). Phosphorylated at Ser-28, Ser-34 and Ser-64 in merozoites in response to low extracellular level of K(+) (PubMed:32817103). Phosphorylation at Thr-231 may regulate CDPK1 kinase activity (PubMed:26149123). Phosphorylation increases in response to an increase in intracellular Ca(2+) levels (PubMed:32484216). Autophosphorylated in vitro (PubMed:17123645, PubMed:22539638, PubMed:23204525, PubMed:26149123, PubMed:32484216). Autophosphorylation does not affect membrane localization in vitro (PubMed:15491359).</text>
</comment>
<comment type="disruption phenotype">
    <text evidence="14 19">Conditional knockdown at the ring stage produces the development of mature schizonts and the subsequent release of merozoites from the host erythrocytes; however, the invasion of new erythrocytes by these merozoites is severely reduced due to a severe defect in adhesion to the erythrocyte membrane (PubMed:28680058). In merozoites, release of host glycophorin A/GYPA ligand EBA-175 from micronemes is impaired but not AMA1 (PubMed:28680058). In late schizont, phosphorylation of several proteins including GAP45, IMC1g and PKAr is reduced (PubMed:28680058). Reduced PKA activity (PubMed:28680058). Rhoptry protein RhopH3 phosphorylation and secretion are reduced in merozoites (PubMed:33024030).</text>
</comment>
<comment type="similarity">
    <text evidence="3">Belongs to the protein kinase superfamily. Ser/Thr protein kinase family. CDPK subfamily.</text>
</comment>
<comment type="caution">
    <text evidence="24">Unlike P.berghei CDPK1, appears to be involved in the asexual blood stage and in male gamete exflagellation prior host erythrocyte membrane rupture.</text>
</comment>
<sequence length="524" mass="60800">MGCSQSSNVKDFKTRRSKFTNGNNYGKSGNNKNSEDLAINPGMYVRKKEGKIGESYFKVRKLGSGAYGEVLLCREKHGHGEKAIKVIKKSQFDKMKYSITNKIECDDKIHEEIYNEISLLKSLDHPNIIKLFDVFEDKKYFYLVTEFYEGGELFEQIINRHKFDECDAANIMKQILSGICYLHKHNIVHRDIKPENILLENKHSLLNIKIVDFGLSSFFSKDNKLRDRLGTAYYIAPEVLRKKYNEKCDVWSCGVILYILLCGYPPFGGQNDQDIIKKVEKGKYYFDFNDWKNISEEAKELIKLMLTYDYNKRITAKEALNSKWIKKYANNINKSDQKTLCGALSNMRKFEGSQKLAQAAILFIGSKLTTLEERKELTDIFKKLDKNGDGQLDKKELIEGYNILRSFKNELGELKNVEEEVDNILKEVDFDKNGYIEYSEFISVCMDKQILFSEERLRDAFNLFDTDKSGKITKEELANLFGLTSISEQMWNEVLGEADKNKDNMIDFDEFVNMMHKICDNKSS</sequence>
<feature type="initiator methionine" description="Removed" evidence="7">
    <location>
        <position position="1"/>
    </location>
</feature>
<feature type="chain" id="PRO_0000085834" description="Calcium-dependent protein kinase 1">
    <location>
        <begin position="2"/>
        <end position="524"/>
    </location>
</feature>
<feature type="domain" description="Protein kinase" evidence="3">
    <location>
        <begin position="56"/>
        <end position="325"/>
    </location>
</feature>
<feature type="domain" description="EF-hand 1" evidence="4">
    <location>
        <begin position="372"/>
        <end position="407"/>
    </location>
</feature>
<feature type="domain" description="EF-hand 2" evidence="4">
    <location>
        <begin position="416"/>
        <end position="451"/>
    </location>
</feature>
<feature type="domain" description="EF-hand 3" evidence="4">
    <location>
        <begin position="452"/>
        <end position="487"/>
    </location>
</feature>
<feature type="domain" description="EF-hand 4" evidence="4">
    <location>
        <begin position="488"/>
        <end position="521"/>
    </location>
</feature>
<feature type="region of interest" description="Disordered" evidence="6">
    <location>
        <begin position="1"/>
        <end position="34"/>
    </location>
</feature>
<feature type="region of interest" description="J domain" evidence="23">
    <location>
        <begin position="346"/>
        <end position="364"/>
    </location>
</feature>
<feature type="short sequence motif" description="Basic cluster involved in membrane binding" evidence="7">
    <location>
        <begin position="10"/>
        <end position="20"/>
    </location>
</feature>
<feature type="short sequence motif" description="J domain autoinhibitory motif" evidence="23">
    <location>
        <begin position="346"/>
        <end position="353"/>
    </location>
</feature>
<feature type="short sequence motif" description="J domain interacts with the EF-hand domains" evidence="12 23">
    <location>
        <begin position="354"/>
        <end position="364"/>
    </location>
</feature>
<feature type="compositionally biased region" description="Low complexity" evidence="6">
    <location>
        <begin position="21"/>
        <end position="32"/>
    </location>
</feature>
<feature type="active site" description="Proton acceptor" evidence="3 5">
    <location>
        <position position="191"/>
    </location>
</feature>
<feature type="binding site" evidence="3">
    <location>
        <begin position="62"/>
        <end position="70"/>
    </location>
    <ligand>
        <name>ATP</name>
        <dbReference type="ChEBI" id="CHEBI:30616"/>
    </ligand>
</feature>
<feature type="binding site" evidence="3">
    <location>
        <position position="85"/>
    </location>
    <ligand>
        <name>ATP</name>
        <dbReference type="ChEBI" id="CHEBI:30616"/>
    </ligand>
</feature>
<feature type="binding site" evidence="4">
    <location>
        <position position="385"/>
    </location>
    <ligand>
        <name>Ca(2+)</name>
        <dbReference type="ChEBI" id="CHEBI:29108"/>
        <label>1</label>
    </ligand>
</feature>
<feature type="binding site" evidence="4">
    <location>
        <position position="387"/>
    </location>
    <ligand>
        <name>Ca(2+)</name>
        <dbReference type="ChEBI" id="CHEBI:29108"/>
        <label>1</label>
    </ligand>
</feature>
<feature type="binding site" evidence="4">
    <location>
        <position position="389"/>
    </location>
    <ligand>
        <name>Ca(2+)</name>
        <dbReference type="ChEBI" id="CHEBI:29108"/>
        <label>1</label>
    </ligand>
</feature>
<feature type="binding site" evidence="4">
    <location>
        <position position="391"/>
    </location>
    <ligand>
        <name>Ca(2+)</name>
        <dbReference type="ChEBI" id="CHEBI:29108"/>
        <label>1</label>
    </ligand>
</feature>
<feature type="binding site" evidence="4">
    <location>
        <position position="396"/>
    </location>
    <ligand>
        <name>Ca(2+)</name>
        <dbReference type="ChEBI" id="CHEBI:29108"/>
        <label>1</label>
    </ligand>
</feature>
<feature type="binding site" evidence="4">
    <location>
        <position position="429"/>
    </location>
    <ligand>
        <name>Ca(2+)</name>
        <dbReference type="ChEBI" id="CHEBI:29108"/>
        <label>2</label>
    </ligand>
</feature>
<feature type="binding site" evidence="4">
    <location>
        <position position="431"/>
    </location>
    <ligand>
        <name>Ca(2+)</name>
        <dbReference type="ChEBI" id="CHEBI:29108"/>
        <label>2</label>
    </ligand>
</feature>
<feature type="binding site" evidence="4">
    <location>
        <position position="433"/>
    </location>
    <ligand>
        <name>Ca(2+)</name>
        <dbReference type="ChEBI" id="CHEBI:29108"/>
        <label>2</label>
    </ligand>
</feature>
<feature type="binding site" evidence="4">
    <location>
        <position position="435"/>
    </location>
    <ligand>
        <name>Ca(2+)</name>
        <dbReference type="ChEBI" id="CHEBI:29108"/>
        <label>2</label>
    </ligand>
</feature>
<feature type="binding site" evidence="4">
    <location>
        <position position="440"/>
    </location>
    <ligand>
        <name>Ca(2+)</name>
        <dbReference type="ChEBI" id="CHEBI:29108"/>
        <label>2</label>
    </ligand>
</feature>
<feature type="binding site" evidence="4">
    <location>
        <position position="465"/>
    </location>
    <ligand>
        <name>Ca(2+)</name>
        <dbReference type="ChEBI" id="CHEBI:29108"/>
        <label>3</label>
    </ligand>
</feature>
<feature type="binding site" evidence="4">
    <location>
        <position position="467"/>
    </location>
    <ligand>
        <name>Ca(2+)</name>
        <dbReference type="ChEBI" id="CHEBI:29108"/>
        <label>3</label>
    </ligand>
</feature>
<feature type="binding site" evidence="4">
    <location>
        <position position="469"/>
    </location>
    <ligand>
        <name>Ca(2+)</name>
        <dbReference type="ChEBI" id="CHEBI:29108"/>
        <label>3</label>
    </ligand>
</feature>
<feature type="binding site" evidence="4">
    <location>
        <position position="471"/>
    </location>
    <ligand>
        <name>Ca(2+)</name>
        <dbReference type="ChEBI" id="CHEBI:29108"/>
        <label>3</label>
    </ligand>
</feature>
<feature type="binding site" evidence="4">
    <location>
        <position position="476"/>
    </location>
    <ligand>
        <name>Ca(2+)</name>
        <dbReference type="ChEBI" id="CHEBI:29108"/>
        <label>3</label>
    </ligand>
</feature>
<feature type="binding site" evidence="4">
    <location>
        <position position="499"/>
    </location>
    <ligand>
        <name>Ca(2+)</name>
        <dbReference type="ChEBI" id="CHEBI:29108"/>
        <label>4</label>
    </ligand>
</feature>
<feature type="binding site" evidence="4">
    <location>
        <position position="501"/>
    </location>
    <ligand>
        <name>Ca(2+)</name>
        <dbReference type="ChEBI" id="CHEBI:29108"/>
        <label>4</label>
    </ligand>
</feature>
<feature type="binding site" evidence="4">
    <location>
        <position position="503"/>
    </location>
    <ligand>
        <name>Ca(2+)</name>
        <dbReference type="ChEBI" id="CHEBI:29108"/>
        <label>4</label>
    </ligand>
</feature>
<feature type="binding site" evidence="4">
    <location>
        <position position="505"/>
    </location>
    <ligand>
        <name>Ca(2+)</name>
        <dbReference type="ChEBI" id="CHEBI:29108"/>
        <label>4</label>
    </ligand>
</feature>
<feature type="binding site" evidence="4">
    <location>
        <position position="510"/>
    </location>
    <ligand>
        <name>Ca(2+)</name>
        <dbReference type="ChEBI" id="CHEBI:29108"/>
        <label>4</label>
    </ligand>
</feature>
<feature type="modified residue" description="Phosphoserine; by autocatalysis" evidence="11 18">
    <location>
        <position position="17"/>
    </location>
</feature>
<feature type="modified residue" description="Phosphoserine; by autocatalysis" evidence="11 18">
    <location>
        <position position="28"/>
    </location>
</feature>
<feature type="modified residue" description="Phosphoserine; by autocatalysis" evidence="18">
    <location>
        <position position="34"/>
    </location>
</feature>
<feature type="modified residue" description="Phosphoserine; by PKG; by autocatalysis" evidence="11 13 18">
    <location>
        <position position="64"/>
    </location>
</feature>
<feature type="modified residue" description="Phosphothreonine; by autocatalysis" evidence="11">
    <location>
        <position position="100"/>
    </location>
</feature>
<feature type="modified residue" description="Phosphoserine; by autocatalysis" evidence="11">
    <location>
        <position position="118"/>
    </location>
</feature>
<feature type="modified residue" description="Phosphoserine" evidence="11 18">
    <location>
        <position position="217"/>
    </location>
</feature>
<feature type="modified residue" description="Phosphoserine; by autocatalysis" evidence="11">
    <location>
        <position position="220"/>
    </location>
</feature>
<feature type="modified residue" description="Phosphothreonine; by PKG; by autocatalysis" evidence="11 13">
    <location>
        <position position="231"/>
    </location>
</feature>
<feature type="modified residue" description="Phosphoserine; by autocatalysis" evidence="11">
    <location>
        <position position="335"/>
    </location>
</feature>
<feature type="lipid moiety-binding region" description="N-myristoyl glycine" evidence="7">
    <location>
        <position position="2"/>
    </location>
</feature>
<feature type="lipid moiety-binding region" description="S-palmitoyl cysteine" evidence="22 25">
    <location>
        <position position="3"/>
    </location>
</feature>
<feature type="mutagenesis site" description="Severe loss of catalytic activity." evidence="11">
    <location>
        <begin position="2"/>
        <end position="50"/>
    </location>
</feature>
<feature type="mutagenesis site" description="Severe loss of catalytic activity." evidence="11">
    <location>
        <begin position="2"/>
        <end position="40"/>
    </location>
</feature>
<feature type="mutagenesis site" description="Severe loss of catalytic activity." evidence="11">
    <location>
        <begin position="2"/>
        <end position="30"/>
    </location>
</feature>
<feature type="mutagenesis site" description="No effect on catalytic activity." evidence="11">
    <location>
        <begin position="2"/>
        <end position="20"/>
    </location>
</feature>
<feature type="mutagenesis site" description="Loss of myristoylation. Severe reduction in membrane binding. Loss of membrane binding; when associated with 10-K--T-20 DEL." evidence="7">
    <original>G</original>
    <variation>V</variation>
    <location>
        <position position="2"/>
    </location>
</feature>
<feature type="mutagenesis site" description="Does not affect myristoylation. Severe reduction in membrane binding. Loss of membrane binding; when associated with V-2." evidence="7">
    <location>
        <begin position="10"/>
        <end position="20"/>
    </location>
</feature>
<feature type="mutagenesis site" description="Severe loss of ATP binding. Partial loss of catalytic activity." evidence="11">
    <original>K</original>
    <variation>A</variation>
    <location>
        <position position="27"/>
    </location>
</feature>
<feature type="mutagenesis site" description="Loss of phosphorylation. No effect on catalytic activity." evidence="13">
    <original>S</original>
    <variation>A</variation>
    <location>
        <position position="64"/>
    </location>
</feature>
<feature type="mutagenesis site" description="Severe loss of catalytic activity." evidence="11">
    <original>E</original>
    <variation>A</variation>
    <location>
        <position position="152"/>
    </location>
</feature>
<feature type="mutagenesis site" description="Severe loss of catalytic activity." evidence="11">
    <original>F</original>
    <variation>A</variation>
    <location>
        <position position="154"/>
    </location>
</feature>
<feature type="mutagenesis site" description="No effect on catalytic activity." evidence="11">
    <original>E</original>
    <variation>A</variation>
    <location>
        <position position="155"/>
    </location>
</feature>
<feature type="mutagenesis site" description="Severe loss of catalytic activity." evidence="11">
    <original>II</original>
    <variation>AA</variation>
    <location>
        <begin position="157"/>
        <end position="158"/>
    </location>
</feature>
<feature type="mutagenesis site" description="Loss of catalytic activity." evidence="9 13">
    <original>D</original>
    <variation>N</variation>
    <location>
        <position position="191"/>
    </location>
</feature>
<feature type="mutagenesis site" description="Loss of catalytic activity." evidence="11">
    <original>T</original>
    <variation>A</variation>
    <location>
        <position position="231"/>
    </location>
</feature>
<feature type="mutagenesis site" description="Loss of phosphorylation. Loss of catalytic activity." evidence="11">
    <original>S</original>
    <variation>A</variation>
    <location>
        <position position="335"/>
    </location>
</feature>
<feature type="mutagenesis site" description="Phospho-mimetic mutant. No effect on catalytic activity." evidence="11">
    <original>S</original>
    <variation>D</variation>
    <location>
        <position position="335"/>
    </location>
</feature>
<feature type="mutagenesis site" description="No effect on catalytic activity." evidence="11">
    <original>T</original>
    <variation>D</variation>
    <location>
        <position position="339"/>
    </location>
</feature>
<feature type="mutagenesis site" description="Constitutively active." evidence="10">
    <location>
        <begin position="342"/>
        <end position="524"/>
    </location>
</feature>
<feature type="mutagenesis site" description="Severe loss of catalytic activity." evidence="11">
    <original>M</original>
    <variation>A</variation>
    <location>
        <position position="347"/>
    </location>
</feature>
<feature type="mutagenesis site" description="Severe loss of catalytic activity." evidence="11 12">
    <original>F</original>
    <variation>A</variation>
    <location>
        <position position="350"/>
    </location>
</feature>
<feature type="mutagenesis site" description="No effect on catalytic activity." evidence="12">
    <original>S</original>
    <variation>A</variation>
    <location>
        <position position="353"/>
    </location>
</feature>
<feature type="mutagenesis site" description="No effect on catalytic activity." evidence="11">
    <original>K</original>
    <variation>A</variation>
    <location>
        <position position="355"/>
    </location>
</feature>
<feature type="mutagenesis site" description="Severe loss of catalytic activity." evidence="12">
    <original>L</original>
    <variation>A</variation>
    <location>
        <position position="356"/>
    </location>
</feature>
<feature type="mutagenesis site" description="Severe loss of catalytic activity." evidence="12">
    <original>FI</original>
    <variation>AA</variation>
    <location>
        <begin position="363"/>
        <end position="364"/>
    </location>
</feature>
<feature type="mutagenesis site" description="Slight decrease in catalytic activity." evidence="11">
    <original>S</original>
    <variation>A</variation>
    <location>
        <position position="366"/>
    </location>
</feature>
<feature type="mutagenesis site" description="Slight decrease in catalytic activity." evidence="11">
    <original>TT</original>
    <variation>AA</variation>
    <location>
        <begin position="369"/>
        <end position="370"/>
    </location>
</feature>
<feature type="mutagenesis site" description="Severe loss of catalytic activity." evidence="11">
    <original>R</original>
    <variation>A</variation>
    <location>
        <position position="456"/>
    </location>
</feature>
<keyword id="KW-0067">ATP-binding</keyword>
<keyword id="KW-0106">Calcium</keyword>
<keyword id="KW-1003">Cell membrane</keyword>
<keyword id="KW-0966">Cell projection</keyword>
<keyword id="KW-0969">Cilium</keyword>
<keyword id="KW-0963">Cytoplasm</keyword>
<keyword id="KW-0282">Flagellum</keyword>
<keyword id="KW-1032">Host cell membrane</keyword>
<keyword id="KW-1043">Host membrane</keyword>
<keyword id="KW-0418">Kinase</keyword>
<keyword id="KW-0449">Lipoprotein</keyword>
<keyword id="KW-0460">Magnesium</keyword>
<keyword id="KW-0472">Membrane</keyword>
<keyword id="KW-0479">Metal-binding</keyword>
<keyword id="KW-0519">Myristate</keyword>
<keyword id="KW-0547">Nucleotide-binding</keyword>
<keyword id="KW-0564">Palmitate</keyword>
<keyword id="KW-0597">Phosphoprotein</keyword>
<keyword id="KW-1185">Reference proteome</keyword>
<keyword id="KW-0677">Repeat</keyword>
<keyword id="KW-0723">Serine/threonine-protein kinase</keyword>
<keyword id="KW-0808">Transferase</keyword>
<name>CDPK1_PLAF7</name>
<dbReference type="EC" id="2.7.11.1" evidence="8 9 10 11 12 13 14"/>
<dbReference type="EMBL" id="LN999943">
    <property type="protein sequence ID" value="CZT98189.1"/>
    <property type="molecule type" value="Genomic_DNA"/>
</dbReference>
<dbReference type="PIR" id="A45472">
    <property type="entry name" value="A45472"/>
</dbReference>
<dbReference type="RefSeq" id="XP_001349680.1">
    <property type="nucleotide sequence ID" value="XM_001349644.1"/>
</dbReference>
<dbReference type="SMR" id="P62344"/>
<dbReference type="BioGRID" id="1208081">
    <property type="interactions" value="9"/>
</dbReference>
<dbReference type="FunCoup" id="P62344">
    <property type="interactions" value="3"/>
</dbReference>
<dbReference type="IntAct" id="P62344">
    <property type="interactions" value="8"/>
</dbReference>
<dbReference type="STRING" id="36329.P62344"/>
<dbReference type="ChEMBL" id="CHEMBL1908387"/>
<dbReference type="DrugBank" id="DB12010">
    <property type="generic name" value="Fostamatinib"/>
</dbReference>
<dbReference type="DrugCentral" id="P62344"/>
<dbReference type="iPTMnet" id="P62344"/>
<dbReference type="SwissPalm" id="P62344"/>
<dbReference type="PaxDb" id="5833-PFB0815w"/>
<dbReference type="EnsemblProtists" id="CZT98189">
    <property type="protein sequence ID" value="CZT98189"/>
    <property type="gene ID" value="PF3D7_0217500"/>
</dbReference>
<dbReference type="GeneID" id="812762"/>
<dbReference type="KEGG" id="pfa:PF3D7_0217500"/>
<dbReference type="VEuPathDB" id="PlasmoDB:PF3D7_0217500"/>
<dbReference type="HOGENOM" id="CLU_000288_37_4_1"/>
<dbReference type="InParanoid" id="P62344"/>
<dbReference type="OMA" id="DESEVMN"/>
<dbReference type="OrthoDB" id="40902at2759"/>
<dbReference type="PhylomeDB" id="P62344"/>
<dbReference type="BRENDA" id="2.7.11.1">
    <property type="organism ID" value="4889"/>
</dbReference>
<dbReference type="Reactome" id="R-PFA-5687128">
    <property type="pathway name" value="MAPK6/MAPK4 signaling"/>
</dbReference>
<dbReference type="PRO" id="PR:P62344"/>
<dbReference type="Proteomes" id="UP000001450">
    <property type="component" value="Chromosome 2"/>
</dbReference>
<dbReference type="GO" id="GO:0005737">
    <property type="term" value="C:cytoplasm"/>
    <property type="evidence" value="ECO:0000318"/>
    <property type="project" value="GO_Central"/>
</dbReference>
<dbReference type="GO" id="GO:0020002">
    <property type="term" value="C:host cell plasma membrane"/>
    <property type="evidence" value="ECO:0000314"/>
    <property type="project" value="UniProtKB"/>
</dbReference>
<dbReference type="GO" id="GO:0016020">
    <property type="term" value="C:membrane"/>
    <property type="evidence" value="ECO:0000314"/>
    <property type="project" value="UniProtKB"/>
</dbReference>
<dbReference type="GO" id="GO:0031514">
    <property type="term" value="C:motile cilium"/>
    <property type="evidence" value="ECO:0007669"/>
    <property type="project" value="UniProtKB-SubCell"/>
</dbReference>
<dbReference type="GO" id="GO:0005634">
    <property type="term" value="C:nucleus"/>
    <property type="evidence" value="ECO:0000318"/>
    <property type="project" value="GO_Central"/>
</dbReference>
<dbReference type="GO" id="GO:0005886">
    <property type="term" value="C:plasma membrane"/>
    <property type="evidence" value="ECO:0000314"/>
    <property type="project" value="UniProtKB"/>
</dbReference>
<dbReference type="GO" id="GO:0032991">
    <property type="term" value="C:protein-containing complex"/>
    <property type="evidence" value="ECO:0000314"/>
    <property type="project" value="UniProtKB"/>
</dbReference>
<dbReference type="GO" id="GO:0020004">
    <property type="term" value="C:symbiont-containing vacuolar space"/>
    <property type="evidence" value="ECO:0000314"/>
    <property type="project" value="UniProtKB"/>
</dbReference>
<dbReference type="GO" id="GO:0020005">
    <property type="term" value="C:symbiont-containing vacuole membrane"/>
    <property type="evidence" value="ECO:0000314"/>
    <property type="project" value="UniProtKB"/>
</dbReference>
<dbReference type="GO" id="GO:0071889">
    <property type="term" value="F:14-3-3 protein binding"/>
    <property type="evidence" value="ECO:0000353"/>
    <property type="project" value="UniProtKB"/>
</dbReference>
<dbReference type="GO" id="GO:0005524">
    <property type="term" value="F:ATP binding"/>
    <property type="evidence" value="ECO:0007669"/>
    <property type="project" value="UniProtKB-KW"/>
</dbReference>
<dbReference type="GO" id="GO:0005509">
    <property type="term" value="F:calcium ion binding"/>
    <property type="evidence" value="ECO:0007669"/>
    <property type="project" value="InterPro"/>
</dbReference>
<dbReference type="GO" id="GO:0009931">
    <property type="term" value="F:calcium-dependent protein serine/threonine kinase activity"/>
    <property type="evidence" value="ECO:0000314"/>
    <property type="project" value="UniProtKB"/>
</dbReference>
<dbReference type="GO" id="GO:0004683">
    <property type="term" value="F:calcium/calmodulin-dependent protein kinase activity"/>
    <property type="evidence" value="ECO:0000318"/>
    <property type="project" value="GO_Central"/>
</dbReference>
<dbReference type="GO" id="GO:0005516">
    <property type="term" value="F:calmodulin binding"/>
    <property type="evidence" value="ECO:0000318"/>
    <property type="project" value="GO_Central"/>
</dbReference>
<dbReference type="GO" id="GO:0106310">
    <property type="term" value="F:protein serine kinase activity"/>
    <property type="evidence" value="ECO:0007669"/>
    <property type="project" value="RHEA"/>
</dbReference>
<dbReference type="GO" id="GO:0004674">
    <property type="term" value="F:protein serine/threonine kinase activity"/>
    <property type="evidence" value="ECO:0000314"/>
    <property type="project" value="UniProtKB"/>
</dbReference>
<dbReference type="GO" id="GO:0035556">
    <property type="term" value="P:intracellular signal transduction"/>
    <property type="evidence" value="ECO:0000318"/>
    <property type="project" value="GO_Central"/>
</dbReference>
<dbReference type="GO" id="GO:0018105">
    <property type="term" value="P:peptidyl-serine phosphorylation"/>
    <property type="evidence" value="ECO:0000314"/>
    <property type="project" value="UniProtKB"/>
</dbReference>
<dbReference type="GO" id="GO:0018107">
    <property type="term" value="P:peptidyl-threonine phosphorylation"/>
    <property type="evidence" value="ECO:0000314"/>
    <property type="project" value="UniProtKB"/>
</dbReference>
<dbReference type="GO" id="GO:1903307">
    <property type="term" value="P:positive regulation of regulated secretory pathway"/>
    <property type="evidence" value="ECO:0000314"/>
    <property type="project" value="UniProtKB"/>
</dbReference>
<dbReference type="GO" id="GO:0046777">
    <property type="term" value="P:protein autophosphorylation"/>
    <property type="evidence" value="ECO:0000314"/>
    <property type="project" value="UniProtKB"/>
</dbReference>
<dbReference type="GO" id="GO:0006468">
    <property type="term" value="P:protein phosphorylation"/>
    <property type="evidence" value="ECO:0000314"/>
    <property type="project" value="UniProtKB"/>
</dbReference>
<dbReference type="CDD" id="cd00051">
    <property type="entry name" value="EFh"/>
    <property type="match status" value="1"/>
</dbReference>
<dbReference type="CDD" id="cd05117">
    <property type="entry name" value="STKc_CAMK"/>
    <property type="match status" value="1"/>
</dbReference>
<dbReference type="FunFam" id="1.10.510.10:FF:000398">
    <property type="entry name" value="Calcium-dependent protein kinase 1"/>
    <property type="match status" value="1"/>
</dbReference>
<dbReference type="FunFam" id="3.30.200.20:FF:000696">
    <property type="entry name" value="Calcium-dependent protein kinase 1"/>
    <property type="match status" value="1"/>
</dbReference>
<dbReference type="FunFam" id="1.10.238.10:FF:000001">
    <property type="entry name" value="Calmodulin 1"/>
    <property type="match status" value="1"/>
</dbReference>
<dbReference type="Gene3D" id="1.10.238.10">
    <property type="entry name" value="EF-hand"/>
    <property type="match status" value="2"/>
</dbReference>
<dbReference type="Gene3D" id="3.30.200.20">
    <property type="entry name" value="Phosphorylase Kinase, domain 1"/>
    <property type="match status" value="1"/>
</dbReference>
<dbReference type="Gene3D" id="1.10.510.10">
    <property type="entry name" value="Transferase(Phosphotransferase) domain 1"/>
    <property type="match status" value="1"/>
</dbReference>
<dbReference type="InterPro" id="IPR050205">
    <property type="entry name" value="CDPK_Ser/Thr_kinases"/>
</dbReference>
<dbReference type="InterPro" id="IPR011992">
    <property type="entry name" value="EF-hand-dom_pair"/>
</dbReference>
<dbReference type="InterPro" id="IPR018247">
    <property type="entry name" value="EF_Hand_1_Ca_BS"/>
</dbReference>
<dbReference type="InterPro" id="IPR002048">
    <property type="entry name" value="EF_hand_dom"/>
</dbReference>
<dbReference type="InterPro" id="IPR011009">
    <property type="entry name" value="Kinase-like_dom_sf"/>
</dbReference>
<dbReference type="InterPro" id="IPR000719">
    <property type="entry name" value="Prot_kinase_dom"/>
</dbReference>
<dbReference type="InterPro" id="IPR017441">
    <property type="entry name" value="Protein_kinase_ATP_BS"/>
</dbReference>
<dbReference type="InterPro" id="IPR008271">
    <property type="entry name" value="Ser/Thr_kinase_AS"/>
</dbReference>
<dbReference type="PANTHER" id="PTHR24349">
    <property type="entry name" value="SERINE/THREONINE-PROTEIN KINASE"/>
    <property type="match status" value="1"/>
</dbReference>
<dbReference type="Pfam" id="PF13499">
    <property type="entry name" value="EF-hand_7"/>
    <property type="match status" value="2"/>
</dbReference>
<dbReference type="Pfam" id="PF00069">
    <property type="entry name" value="Pkinase"/>
    <property type="match status" value="1"/>
</dbReference>
<dbReference type="SMART" id="SM00054">
    <property type="entry name" value="EFh"/>
    <property type="match status" value="4"/>
</dbReference>
<dbReference type="SMART" id="SM00220">
    <property type="entry name" value="S_TKc"/>
    <property type="match status" value="1"/>
</dbReference>
<dbReference type="SUPFAM" id="SSF47473">
    <property type="entry name" value="EF-hand"/>
    <property type="match status" value="1"/>
</dbReference>
<dbReference type="SUPFAM" id="SSF56112">
    <property type="entry name" value="Protein kinase-like (PK-like)"/>
    <property type="match status" value="1"/>
</dbReference>
<dbReference type="PROSITE" id="PS00018">
    <property type="entry name" value="EF_HAND_1"/>
    <property type="match status" value="4"/>
</dbReference>
<dbReference type="PROSITE" id="PS50222">
    <property type="entry name" value="EF_HAND_2"/>
    <property type="match status" value="4"/>
</dbReference>
<dbReference type="PROSITE" id="PS00107">
    <property type="entry name" value="PROTEIN_KINASE_ATP"/>
    <property type="match status" value="1"/>
</dbReference>
<dbReference type="PROSITE" id="PS50011">
    <property type="entry name" value="PROTEIN_KINASE_DOM"/>
    <property type="match status" value="1"/>
</dbReference>
<dbReference type="PROSITE" id="PS00108">
    <property type="entry name" value="PROTEIN_KINASE_ST"/>
    <property type="match status" value="1"/>
</dbReference>
<evidence type="ECO:0000250" key="1">
    <source>
        <dbReference type="UniProtKB" id="A0A2I0BVG8"/>
    </source>
</evidence>
<evidence type="ECO:0000250" key="2">
    <source>
        <dbReference type="UniProtKB" id="P62343"/>
    </source>
</evidence>
<evidence type="ECO:0000255" key="3">
    <source>
        <dbReference type="PROSITE-ProRule" id="PRU00159"/>
    </source>
</evidence>
<evidence type="ECO:0000255" key="4">
    <source>
        <dbReference type="PROSITE-ProRule" id="PRU00448"/>
    </source>
</evidence>
<evidence type="ECO:0000255" key="5">
    <source>
        <dbReference type="PROSITE-ProRule" id="PRU10027"/>
    </source>
</evidence>
<evidence type="ECO:0000256" key="6">
    <source>
        <dbReference type="SAM" id="MobiDB-lite"/>
    </source>
</evidence>
<evidence type="ECO:0000269" key="7">
    <source>
    </source>
</evidence>
<evidence type="ECO:0000269" key="8">
    <source>
    </source>
</evidence>
<evidence type="ECO:0000269" key="9">
    <source>
    </source>
</evidence>
<evidence type="ECO:0000269" key="10">
    <source>
    </source>
</evidence>
<evidence type="ECO:0000269" key="11">
    <source>
    </source>
</evidence>
<evidence type="ECO:0000269" key="12">
    <source>
    </source>
</evidence>
<evidence type="ECO:0000269" key="13">
    <source>
    </source>
</evidence>
<evidence type="ECO:0000269" key="14">
    <source>
    </source>
</evidence>
<evidence type="ECO:0000269" key="15">
    <source>
    </source>
</evidence>
<evidence type="ECO:0000269" key="16">
    <source>
    </source>
</evidence>
<evidence type="ECO:0000269" key="17">
    <source>
    </source>
</evidence>
<evidence type="ECO:0000269" key="18">
    <source>
    </source>
</evidence>
<evidence type="ECO:0000269" key="19">
    <source>
    </source>
</evidence>
<evidence type="ECO:0000303" key="20">
    <source>
    </source>
</evidence>
<evidence type="ECO:0000305" key="21"/>
<evidence type="ECO:0000305" key="22">
    <source>
    </source>
</evidence>
<evidence type="ECO:0000305" key="23">
    <source>
    </source>
</evidence>
<evidence type="ECO:0000305" key="24">
    <source>
    </source>
</evidence>
<evidence type="ECO:0000305" key="25">
    <source>
    </source>
</evidence>
<gene>
    <name evidence="20" type="primary">CDPK1</name>
    <name type="synonym">CPK1</name>
    <name type="ORF">PF3D7_0217500</name>
    <name type="ORF">PFB0815w</name>
</gene>
<organism>
    <name type="scientific">Plasmodium falciparum (isolate 3D7)</name>
    <dbReference type="NCBI Taxonomy" id="36329"/>
    <lineage>
        <taxon>Eukaryota</taxon>
        <taxon>Sar</taxon>
        <taxon>Alveolata</taxon>
        <taxon>Apicomplexa</taxon>
        <taxon>Aconoidasida</taxon>
        <taxon>Haemosporida</taxon>
        <taxon>Plasmodiidae</taxon>
        <taxon>Plasmodium</taxon>
        <taxon>Plasmodium (Laverania)</taxon>
    </lineage>
</organism>
<reference key="1">
    <citation type="journal article" date="1998" name="Science">
        <title>Chromosome 2 sequence of the human malaria parasite Plasmodium falciparum.</title>
        <authorList>
            <person name="Gardner M.J."/>
            <person name="Tettelin H."/>
            <person name="Carucci D.J."/>
            <person name="Cummings L.M."/>
            <person name="Aravind L."/>
            <person name="Koonin E.V."/>
            <person name="Shallom S.J."/>
            <person name="Mason T."/>
            <person name="Yu K."/>
            <person name="Fujii C."/>
            <person name="Pederson J."/>
            <person name="Shen K."/>
            <person name="Jing J."/>
            <person name="Aston C."/>
            <person name="Lai Z."/>
            <person name="Schwartz D.C."/>
            <person name="Pertea M."/>
            <person name="Salzberg S.L."/>
            <person name="Zhou L."/>
            <person name="Sutton G.G."/>
            <person name="Clayton R."/>
            <person name="White O."/>
            <person name="Smith H.O."/>
            <person name="Fraser C.M."/>
            <person name="Adams M.D."/>
            <person name="Venter J.C."/>
            <person name="Hoffman S.L."/>
        </authorList>
    </citation>
    <scope>NUCLEOTIDE SEQUENCE [LARGE SCALE GENOMIC DNA]</scope>
    <source>
        <strain>3D7</strain>
    </source>
</reference>
<reference key="2">
    <citation type="journal article" date="2002" name="Nature">
        <title>Genome sequence of the human malaria parasite Plasmodium falciparum.</title>
        <authorList>
            <person name="Gardner M.J."/>
            <person name="Hall N."/>
            <person name="Fung E."/>
            <person name="White O."/>
            <person name="Berriman M."/>
            <person name="Hyman R.W."/>
            <person name="Carlton J.M."/>
            <person name="Pain A."/>
            <person name="Nelson K.E."/>
            <person name="Bowman S."/>
            <person name="Paulsen I.T."/>
            <person name="James K.D."/>
            <person name="Eisen J.A."/>
            <person name="Rutherford K.M."/>
            <person name="Salzberg S.L."/>
            <person name="Craig A."/>
            <person name="Kyes S."/>
            <person name="Chan M.-S."/>
            <person name="Nene V."/>
            <person name="Shallom S.J."/>
            <person name="Suh B."/>
            <person name="Peterson J."/>
            <person name="Angiuoli S."/>
            <person name="Pertea M."/>
            <person name="Allen J."/>
            <person name="Selengut J."/>
            <person name="Haft D."/>
            <person name="Mather M.W."/>
            <person name="Vaidya A.B."/>
            <person name="Martin D.M.A."/>
            <person name="Fairlamb A.H."/>
            <person name="Fraunholz M.J."/>
            <person name="Roos D.S."/>
            <person name="Ralph S.A."/>
            <person name="McFadden G.I."/>
            <person name="Cummings L.M."/>
            <person name="Subramanian G.M."/>
            <person name="Mungall C."/>
            <person name="Venter J.C."/>
            <person name="Carucci D.J."/>
            <person name="Hoffman S.L."/>
            <person name="Newbold C."/>
            <person name="Davis R.W."/>
            <person name="Fraser C.M."/>
            <person name="Barrell B.G."/>
        </authorList>
    </citation>
    <scope>NUCLEOTIDE SEQUENCE [LARGE SCALE GENOMIC DNA]</scope>
    <source>
        <strain>3D7</strain>
    </source>
</reference>
<reference key="3">
    <citation type="journal article" date="2004" name="Mol. Microbiol.">
        <title>Export of Plasmodium falciparum calcium-dependent protein kinase 1 to the parasitophorous vacuole is dependent on three N-terminal membrane anchor motifs.</title>
        <authorList>
            <person name="Moeskes C."/>
            <person name="Burghaus P.A."/>
            <person name="Wernli B."/>
            <person name="Sauder U."/>
            <person name="Duerrenberger M."/>
            <person name="Kappes B."/>
        </authorList>
    </citation>
    <scope>SUBCELLULAR LOCATION</scope>
    <scope>DEVELOPMENTAL STAGE</scope>
    <scope>MOTIF</scope>
    <scope>MYRISTOYLATION AT GLY-2</scope>
    <scope>PALMITOYLATION AT CYS-3</scope>
    <scope>MUTAGENESIS OF GLY-2 AND 10-LYS--THR-20</scope>
</reference>
<reference key="4">
    <citation type="journal article" date="2007" name="Mol. Biochem. Parasitol.">
        <title>Raf kinase inhibitor protein affects activity of Plasmodium falciparum calcium-dependent protein kinase 1.</title>
        <authorList>
            <person name="Kugelstadt D."/>
            <person name="Winter D."/>
            <person name="Plueckhahn K."/>
            <person name="Lehmann W.D."/>
            <person name="Kappes B."/>
        </authorList>
    </citation>
    <scope>FUNCTION</scope>
    <scope>CATALYTIC ACTIVITY</scope>
    <scope>ACTIVITY REGULATION</scope>
    <scope>PHOSPHORYLATION</scope>
</reference>
<reference key="5">
    <citation type="journal article" date="2008" name="J. Biol. Chem.">
        <title>The motor complex of Plasmodium falciparum: phosphorylation by a calcium-dependent protein kinase.</title>
        <authorList>
            <person name="Green J.L."/>
            <person name="Rees-Channer R.R."/>
            <person name="Howell S.A."/>
            <person name="Martin S.R."/>
            <person name="Knuepfer E."/>
            <person name="Taylor H.M."/>
            <person name="Grainger M."/>
            <person name="Holder A.A."/>
        </authorList>
    </citation>
    <scope>FUNCTION</scope>
    <scope>CATALYTIC ACTIVITY</scope>
    <scope>COFACTOR</scope>
    <scope>ACTIVITY REGULATION</scope>
    <scope>BIOPHYSICOCHEMICAL PROPERTIES</scope>
    <scope>SUBCELLULAR LOCATION</scope>
    <scope>DEVELOPMENTAL STAGE</scope>
    <scope>MUTAGENESIS OF ASP-191</scope>
</reference>
<reference key="6">
    <citation type="journal article" date="2009" name="J. Biol. Chem.">
        <title>Dissection of mechanisms involved in the regulation of Plasmodium falciparum calcium-dependent protein kinase 4.</title>
        <authorList>
            <person name="Ranjan R."/>
            <person name="Ahmed A."/>
            <person name="Gourinath S."/>
            <person name="Sharma P."/>
        </authorList>
    </citation>
    <scope>FUNCTION</scope>
    <scope>CATALYTIC ACTIVITY</scope>
    <scope>ACTIVITY REGULATION</scope>
    <scope>DOMAIN</scope>
    <scope>MOTIF</scope>
    <scope>MUTAGENESIS OF 342-GLY--SER-524</scope>
</reference>
<reference key="7">
    <citation type="journal article" date="2012" name="FASEB J.">
        <title>Novel insights into the regulation of malarial calcium-dependent protein kinase 1.</title>
        <authorList>
            <person name="Ahmed A."/>
            <person name="Gaadhe K."/>
            <person name="Sharma G.P."/>
            <person name="Kumar N."/>
            <person name="Neculai M."/>
            <person name="Hui R."/>
            <person name="Mohanty D."/>
            <person name="Sharma P."/>
        </authorList>
    </citation>
    <scope>FUNCTION</scope>
    <scope>CATALYTIC ACTIVITY</scope>
    <scope>PHOSPHORYLATION AT SER-17; SER-28; SER-64; THR-100; SER-118; SER-217; SER-220; THR-231 AND SER-335</scope>
    <scope>MUTAGENESIS OF 2-GLY--THR-20; 2-GLY--ASN-30; 2-GLY--ASN-40; 2-GLY--GLY-50; LYS-27; GLU-152; PHE-154; GLU-155; 157-ILE-ILE-158; THR-231; SER-335; THR-339; MET-347; PHE-350; LYS-355; SER-366; 369-THR-THR-370 AND ARG-456</scope>
</reference>
<reference key="8">
    <citation type="journal article" date="2013" name="J. Biol. Chem.">
        <title>Characterization of Plasmodium falciparum calcium-dependent protein kinase 1 (PfCDPK1) and its role in microneme secretion during erythrocyte invasion.</title>
        <authorList>
            <person name="Bansal A."/>
            <person name="Singh S."/>
            <person name="More K.R."/>
            <person name="Hans D."/>
            <person name="Nangalia K."/>
            <person name="Yogavel M."/>
            <person name="Sharma A."/>
            <person name="Chitnis C.E."/>
        </authorList>
    </citation>
    <scope>FUNCTION</scope>
    <scope>CATALYTIC ACTIVITY</scope>
    <scope>ACTIVITY REGULATION</scope>
    <scope>SUBCELLULAR LOCATION</scope>
    <scope>DEVELOPMENTAL STAGE</scope>
    <scope>DOMAIN</scope>
    <scope>PHOSPHORYLATION</scope>
    <scope>MUTAGENESIS OF PHE-350; SER-353; LEU-356 AND 363-PHE-ILE-364</scope>
</reference>
<reference key="9">
    <citation type="journal article" date="2015" name="Nat. Commun.">
        <title>Phosphoproteomics reveals malaria parasite Protein Kinase G as a signalling hub regulating egress and invasion.</title>
        <authorList>
            <person name="Alam M.M."/>
            <person name="Solyakov L."/>
            <person name="Bottrill A.R."/>
            <person name="Flueck C."/>
            <person name="Siddiqui F.A."/>
            <person name="Singh S."/>
            <person name="Mistry S."/>
            <person name="Viskaduraki M."/>
            <person name="Lee K."/>
            <person name="Hopp C.S."/>
            <person name="Chitnis C.E."/>
            <person name="Doerig C."/>
            <person name="Moon R.W."/>
            <person name="Green J.L."/>
            <person name="Holder A.A."/>
            <person name="Baker D.A."/>
            <person name="Tobin A.B."/>
        </authorList>
    </citation>
    <scope>CATALYTIC ACTIVITY</scope>
    <scope>SUBUNIT</scope>
    <scope>SUBCELLULAR LOCATION</scope>
    <scope>DEVELOPMENTAL STAGE</scope>
    <scope>IDENTIFICATION BY MASS SPECTROMETRY</scope>
    <scope>PHOSPHORYLATION AT SER-64 AND THR-231</scope>
    <scope>MUTAGENESIS OF SER-64 AND ASP-191</scope>
</reference>
<reference key="10">
    <citation type="journal article" date="2017" name="Nat. Commun.">
        <title>PfCDPK1 mediated signaling in erythrocytic stages of Plasmodium falciparum.</title>
        <authorList>
            <person name="Kumar S."/>
            <person name="Kumar M."/>
            <person name="Ekka R."/>
            <person name="Dvorin J.D."/>
            <person name="Paul A.S."/>
            <person name="Madugundu A.K."/>
            <person name="Gilberger T."/>
            <person name="Gowda H."/>
            <person name="Duraisingh M.T."/>
            <person name="Keshava Prasad T.S."/>
            <person name="Sharma P."/>
        </authorList>
    </citation>
    <scope>FUNCTION</scope>
    <scope>CATALYTIC ACTIVITY</scope>
    <scope>ACTIVITY REGULATION</scope>
    <scope>INTERACTION WITH IMC1G AND PKAR</scope>
    <scope>SUBCELLULAR LOCATION</scope>
    <scope>DEVELOPMENTAL STAGE</scope>
    <scope>DISRUPTION PHENOTYPE</scope>
</reference>
<reference key="11">
    <citation type="journal article" date="2018" name="J. Biol. Chem.">
        <title>Calcium-dependent phosphorylation of Plasmodium falciparum serine repeat antigen 5 triggers merozoite egress.</title>
        <authorList>
            <person name="Iyer G.R."/>
            <person name="Singh S."/>
            <person name="Kaur I."/>
            <person name="Agarwal S."/>
            <person name="Siddiqui M.A."/>
            <person name="Bansal A."/>
            <person name="Kumar G."/>
            <person name="Saini E."/>
            <person name="Paul G."/>
            <person name="Mohmmed A."/>
            <person name="Chitnis C.E."/>
            <person name="Malhotra P."/>
        </authorList>
    </citation>
    <scope>FUNCTION</scope>
    <scope>CATALYTIC ACTIVITY</scope>
    <scope>ACTIVITY REGULATION</scope>
    <scope>INTERACTION WITH SERA5 P50</scope>
    <scope>SUBCELLULAR LOCATION</scope>
    <scope>DEVELOPMENTAL STAGE</scope>
    <scope>IDENTIFICATION BY MASS SPECTROMETRY</scope>
</reference>
<reference key="12">
    <citation type="journal article" date="2020" name="ACS Infect. Dis.">
        <title>Protein S-Palmitoylation Is Responsive to External Signals and Plays a Regulatory Role in Microneme Secretion in Plasmodium falciparum Merozoites.</title>
        <authorList>
            <person name="Siddiqui M.A."/>
            <person name="Singh S."/>
            <person name="Malhotra P."/>
            <person name="Chitnis C.E."/>
        </authorList>
    </citation>
    <scope>SUBCELLULAR LOCATION</scope>
    <scope>DEVELOPMENTAL STAGE</scope>
    <scope>PALMITOYLATION AT CYS-3</scope>
</reference>
<reference key="13">
    <citation type="journal article" date="2020" name="Biochem. J.">
        <title>Molecular dynamics simulations and biochemical characterization of Pf14-3-3 and PfCDPK1 interaction towards its role in growth of human malaria parasite.</title>
        <authorList>
            <person name="Jain R."/>
            <person name="Dey P."/>
            <person name="Gupta S."/>
            <person name="Pati S."/>
            <person name="Bhattacherjee A."/>
            <person name="Munde M."/>
            <person name="Singh S."/>
        </authorList>
    </citation>
    <scope>CATALYTIC ACTIVITY</scope>
    <scope>ACTIVITY REGULATION</scope>
    <scope>INTERACTION WITH 14-3-3I</scope>
    <scope>SUBCELLULAR LOCATION</scope>
    <scope>DEVELOPMENTAL STAGE</scope>
    <scope>PHOSPHORYLATION</scope>
</reference>
<reference key="14">
    <citation type="journal article" date="2020" name="MBio">
        <title>Phosphorylation-Dependent Assembly of a 14-3-3 Mediated Signaling Complex during Red Blood Cell Invasion by Plasmodium falciparum Merozoites.</title>
        <authorList>
            <person name="More K.R."/>
            <person name="Kaur I."/>
            <person name="Giai Gianetto Q."/>
            <person name="Invergo B.M."/>
            <person name="Chaze T."/>
            <person name="Jain R."/>
            <person name="Huon C."/>
            <person name="Gutenbrunner P."/>
            <person name="Weisser H."/>
            <person name="Matondo M."/>
            <person name="Choudhary J.S."/>
            <person name="Langsley G."/>
            <person name="Singh S."/>
            <person name="Chitnis C.E."/>
        </authorList>
    </citation>
    <scope>IDENTIFICATION IN A COMPLEX WITH PKAR AND 14-3-3I</scope>
    <scope>INTERACTION WITH PKAR AND 14-3-3I</scope>
    <scope>DEVELOPMENTAL STAGE</scope>
    <scope>IDENTIFICATION BY MASS SPECTROMETRY</scope>
    <scope>PHOSPHORYLATION AT SER-17; SER-28; SER-34; SER-64 AND SER-217</scope>
</reference>
<reference key="15">
    <citation type="journal article" date="2020" name="MBio">
        <title>Phosphorylation of Rhoptry Protein RhopH3 Is Critical for Host Cell Invasion by the Malaria Parasite.</title>
        <authorList>
            <person name="Ekka R."/>
            <person name="Gupta A."/>
            <person name="Bhatnagar S."/>
            <person name="Malhotra P."/>
            <person name="Sharma P."/>
        </authorList>
    </citation>
    <scope>FUNCTION</scope>
    <scope>CATALYTIC ACTIVITY</scope>
    <scope>INTERACTION WITH RHOPH3</scope>
    <scope>DISRUPTION PHENOTYPE</scope>
</reference>
<accession>P62344</accession>
<accession>A0A143ZWW4</accession>
<accession>Q27731</accession>
<protein>
    <recommendedName>
        <fullName>Calcium-dependent protein kinase 1</fullName>
        <ecNumber evidence="8 9 10 11 12 13 14">2.7.11.1</ecNumber>
    </recommendedName>
    <alternativeName>
        <fullName evidence="20">PfCDPK1</fullName>
    </alternativeName>
</protein>